<name>ADDB_STAHJ</name>
<sequence>MELNAYIGRAGTGKSHHMIDNIKQQMKEDPLGDPIVLIAPTQSTFQLEQAFVNDKELNGSLRTEVLHFERLSYRVFQEVGGLTEERLTQAATEMMIYDLVQQHKSELKLYQSQVNYYGFSEKLSEQIQDFKKYSVTPEHLHTFLQDNDLKTRTRHKLEDISLIYQYFEERINGEFITSEDSLNHFIDILSQSEWIKRAEVYIDGFHNFSTLEYQIIKALVQSAKKVTVLLTTDGNEDPFSLFRKPSEVLTHLKEIAKDLNIELQQQFFKQQYRFNNKDLIQLEQQFDALQINPIAYDGSINILESSSIREEVNEVARQIIKDTRDKQYRYQDIAILYRDEAYAYLFDSVLPQYDIPFNIDTKRSMTHHPIMEMVRSLLEVIQTNWNISPMMRLIKTNILTNHFKDSAYLIDLLENFVVERGVYGKRWLDEKLFSIDNFTKMGRKEHKLTTEEREDFEQVVHLKNDIIDKILTFEKAMNEAENVRGFATAFYETMEAFDLPKYLMTHRDQLDVDGRHEEAEEIDQIWNGLIQILDDLVTVFDNEEMTLKRFLEVFDIGLEQLEFVMIPQTLDQVSIGTMDLAKVDNKKHIYMVGMNDGAMPQPVSSSSLITDEEKKVFEQQAQVELSPTSDILQMDEAFVCYIAMTRGSEQVTFSYSLMGAQGEDKEKSPFIDQIQGLFNGLEVMNIHYQHNAQPLSLMEHPHQTKVVLFESLKAWLEAEMVADVWVDAYQVMRDNDKLNNGLEYLLTALTYDNETVKLDEPLAASLYGSTINASVSRFEGYNDCPFKHYANHGLRLNERTKYKLENFDLGNIFHTALKYISDKVDGDFKNLDNKKIHALTVEALENVLPQVQFNLMDSNAYYRYVSKRIGVIVESTLKALRYQNKNTKFKPQRFEAGFRKTPNNSEELIAQPLITKQGIPVNIRGQIDRIDAYTKDDKSYINIIDYKSSNPSAKLDLKKVYYGKQMQMMTYMDIALQNAQRLGLSNEIKPGGLLYFHVHDERLSFKDWGELEDDALTQDKLEQAFLKEYKLRGLVNSDMDVVDALDIRLEEIGKSDIVPVSLKKDGSIGSRGSSVADETTIHKFIKHNKDNFIKTATNIMEGHTEVAPLKFDDQLPCQFCNFQSVCHVDTIIDSKHYRHVEETIDPIKAIQDVELESGDHNE</sequence>
<keyword id="KW-0004">4Fe-4S</keyword>
<keyword id="KW-0067">ATP-binding</keyword>
<keyword id="KW-0227">DNA damage</keyword>
<keyword id="KW-0234">DNA repair</keyword>
<keyword id="KW-0238">DNA-binding</keyword>
<keyword id="KW-0269">Exonuclease</keyword>
<keyword id="KW-0347">Helicase</keyword>
<keyword id="KW-0378">Hydrolase</keyword>
<keyword id="KW-0408">Iron</keyword>
<keyword id="KW-0411">Iron-sulfur</keyword>
<keyword id="KW-0479">Metal-binding</keyword>
<keyword id="KW-0540">Nuclease</keyword>
<keyword id="KW-0547">Nucleotide-binding</keyword>
<reference key="1">
    <citation type="journal article" date="2005" name="J. Bacteriol.">
        <title>Whole-genome sequencing of Staphylococcus haemolyticus uncovers the extreme plasticity of its genome and the evolution of human-colonizing staphylococcal species.</title>
        <authorList>
            <person name="Takeuchi F."/>
            <person name="Watanabe S."/>
            <person name="Baba T."/>
            <person name="Yuzawa H."/>
            <person name="Ito T."/>
            <person name="Morimoto Y."/>
            <person name="Kuroda M."/>
            <person name="Cui L."/>
            <person name="Takahashi M."/>
            <person name="Ankai A."/>
            <person name="Baba S."/>
            <person name="Fukui S."/>
            <person name="Lee J.C."/>
            <person name="Hiramatsu K."/>
        </authorList>
    </citation>
    <scope>NUCLEOTIDE SEQUENCE [LARGE SCALE GENOMIC DNA]</scope>
    <source>
        <strain>JCSC1435</strain>
    </source>
</reference>
<dbReference type="EC" id="3.1.-.-" evidence="1"/>
<dbReference type="EMBL" id="AP006716">
    <property type="protein sequence ID" value="BAE05293.1"/>
    <property type="molecule type" value="Genomic_DNA"/>
</dbReference>
<dbReference type="RefSeq" id="WP_011276251.1">
    <property type="nucleotide sequence ID" value="NC_007168.1"/>
</dbReference>
<dbReference type="SMR" id="Q4L4Y2"/>
<dbReference type="KEGG" id="sha:SH1984"/>
<dbReference type="eggNOG" id="COG3857">
    <property type="taxonomic scope" value="Bacteria"/>
</dbReference>
<dbReference type="HOGENOM" id="CLU_007838_0_0_9"/>
<dbReference type="OrthoDB" id="9758506at2"/>
<dbReference type="Proteomes" id="UP000000543">
    <property type="component" value="Chromosome"/>
</dbReference>
<dbReference type="GO" id="GO:0051539">
    <property type="term" value="F:4 iron, 4 sulfur cluster binding"/>
    <property type="evidence" value="ECO:0007669"/>
    <property type="project" value="UniProtKB-KW"/>
</dbReference>
<dbReference type="GO" id="GO:0008409">
    <property type="term" value="F:5'-3' exonuclease activity"/>
    <property type="evidence" value="ECO:0007669"/>
    <property type="project" value="UniProtKB-UniRule"/>
</dbReference>
<dbReference type="GO" id="GO:0005524">
    <property type="term" value="F:ATP binding"/>
    <property type="evidence" value="ECO:0007669"/>
    <property type="project" value="UniProtKB-UniRule"/>
</dbReference>
<dbReference type="GO" id="GO:0003690">
    <property type="term" value="F:double-stranded DNA binding"/>
    <property type="evidence" value="ECO:0007669"/>
    <property type="project" value="UniProtKB-UniRule"/>
</dbReference>
<dbReference type="GO" id="GO:0004386">
    <property type="term" value="F:helicase activity"/>
    <property type="evidence" value="ECO:0007669"/>
    <property type="project" value="UniProtKB-KW"/>
</dbReference>
<dbReference type="GO" id="GO:0046872">
    <property type="term" value="F:metal ion binding"/>
    <property type="evidence" value="ECO:0007669"/>
    <property type="project" value="UniProtKB-KW"/>
</dbReference>
<dbReference type="GO" id="GO:0000724">
    <property type="term" value="P:double-strand break repair via homologous recombination"/>
    <property type="evidence" value="ECO:0007669"/>
    <property type="project" value="UniProtKB-UniRule"/>
</dbReference>
<dbReference type="Gene3D" id="3.90.320.10">
    <property type="match status" value="1"/>
</dbReference>
<dbReference type="Gene3D" id="6.10.140.1030">
    <property type="match status" value="1"/>
</dbReference>
<dbReference type="Gene3D" id="3.40.50.300">
    <property type="entry name" value="P-loop containing nucleotide triphosphate hydrolases"/>
    <property type="match status" value="3"/>
</dbReference>
<dbReference type="HAMAP" id="MF_01452">
    <property type="entry name" value="AddB_type1"/>
    <property type="match status" value="1"/>
</dbReference>
<dbReference type="InterPro" id="IPR049035">
    <property type="entry name" value="ADDB_N"/>
</dbReference>
<dbReference type="InterPro" id="IPR014140">
    <property type="entry name" value="DNA_helicase_suAddB"/>
</dbReference>
<dbReference type="InterPro" id="IPR014017">
    <property type="entry name" value="DNA_helicase_UvrD-like_C"/>
</dbReference>
<dbReference type="InterPro" id="IPR027417">
    <property type="entry name" value="P-loop_NTPase"/>
</dbReference>
<dbReference type="InterPro" id="IPR011604">
    <property type="entry name" value="PDDEXK-like_dom_sf"/>
</dbReference>
<dbReference type="InterPro" id="IPR038726">
    <property type="entry name" value="PDDEXK_AddAB-type"/>
</dbReference>
<dbReference type="NCBIfam" id="TIGR02773">
    <property type="entry name" value="addB_Gpos"/>
    <property type="match status" value="1"/>
</dbReference>
<dbReference type="PANTHER" id="PTHR30591">
    <property type="entry name" value="RECBCD ENZYME SUBUNIT RECC"/>
    <property type="match status" value="1"/>
</dbReference>
<dbReference type="PANTHER" id="PTHR30591:SF1">
    <property type="entry name" value="RECBCD ENZYME SUBUNIT RECC"/>
    <property type="match status" value="1"/>
</dbReference>
<dbReference type="Pfam" id="PF21445">
    <property type="entry name" value="ADDB_N"/>
    <property type="match status" value="1"/>
</dbReference>
<dbReference type="Pfam" id="PF12705">
    <property type="entry name" value="PDDEXK_1"/>
    <property type="match status" value="1"/>
</dbReference>
<dbReference type="Pfam" id="PF13361">
    <property type="entry name" value="UvrD_C"/>
    <property type="match status" value="1"/>
</dbReference>
<dbReference type="SUPFAM" id="SSF52540">
    <property type="entry name" value="P-loop containing nucleoside triphosphate hydrolases"/>
    <property type="match status" value="1"/>
</dbReference>
<dbReference type="PROSITE" id="PS51198">
    <property type="entry name" value="UVRD_HELICASE_ATP_BIND"/>
    <property type="match status" value="1"/>
</dbReference>
<dbReference type="PROSITE" id="PS51217">
    <property type="entry name" value="UVRD_HELICASE_CTER"/>
    <property type="match status" value="1"/>
</dbReference>
<gene>
    <name evidence="1" type="primary">addB</name>
    <name type="ordered locus">SH1984</name>
</gene>
<evidence type="ECO:0000255" key="1">
    <source>
        <dbReference type="HAMAP-Rule" id="MF_01452"/>
    </source>
</evidence>
<comment type="function">
    <text evidence="1">The heterodimer acts as both an ATP-dependent DNA helicase and an ATP-dependent, dual-direction single-stranded exonuclease. Recognizes the chi site generating a DNA molecule suitable for the initiation of homologous recombination. The AddB subunit has 5' -&gt; 3' nuclease activity but not helicase activity.</text>
</comment>
<comment type="cofactor">
    <cofactor evidence="1">
        <name>Mg(2+)</name>
        <dbReference type="ChEBI" id="CHEBI:18420"/>
    </cofactor>
</comment>
<comment type="cofactor">
    <cofactor evidence="1">
        <name>[4Fe-4S] cluster</name>
        <dbReference type="ChEBI" id="CHEBI:49883"/>
    </cofactor>
    <text evidence="1">Binds 1 [4Fe-4S] cluster.</text>
</comment>
<comment type="subunit">
    <text evidence="1">Heterodimer of AddA and AddB.</text>
</comment>
<comment type="miscellaneous">
    <text evidence="1">Despite having conserved helicase domains, this subunit does not have helicase activity.</text>
</comment>
<comment type="similarity">
    <text evidence="1">Belongs to the helicase family. AddB/RexB type 1 subfamily.</text>
</comment>
<proteinExistence type="inferred from homology"/>
<accession>Q4L4Y2</accession>
<protein>
    <recommendedName>
        <fullName evidence="1">ATP-dependent helicase/deoxyribonuclease subunit B</fullName>
        <ecNumber evidence="1">3.1.-.-</ecNumber>
    </recommendedName>
    <alternativeName>
        <fullName evidence="1">ATP-dependent helicase/nuclease subunit AddB</fullName>
    </alternativeName>
</protein>
<organism>
    <name type="scientific">Staphylococcus haemolyticus (strain JCSC1435)</name>
    <dbReference type="NCBI Taxonomy" id="279808"/>
    <lineage>
        <taxon>Bacteria</taxon>
        <taxon>Bacillati</taxon>
        <taxon>Bacillota</taxon>
        <taxon>Bacilli</taxon>
        <taxon>Bacillales</taxon>
        <taxon>Staphylococcaceae</taxon>
        <taxon>Staphylococcus</taxon>
    </lineage>
</organism>
<feature type="chain" id="PRO_0000379221" description="ATP-dependent helicase/deoxyribonuclease subunit B">
    <location>
        <begin position="1"/>
        <end position="1162"/>
    </location>
</feature>
<feature type="domain" description="UvrD-like helicase ATP-binding" evidence="1">
    <location>
        <begin position="1"/>
        <end position="275"/>
    </location>
</feature>
<feature type="domain" description="UvrD-like helicase C-terminal" evidence="1">
    <location>
        <begin position="269"/>
        <end position="583"/>
    </location>
</feature>
<feature type="binding site" evidence="1">
    <location>
        <begin position="8"/>
        <end position="15"/>
    </location>
    <ligand>
        <name>ATP</name>
        <dbReference type="ChEBI" id="CHEBI:30616"/>
    </ligand>
</feature>
<feature type="binding site" evidence="1">
    <location>
        <position position="784"/>
    </location>
    <ligand>
        <name>[4Fe-4S] cluster</name>
        <dbReference type="ChEBI" id="CHEBI:49883"/>
    </ligand>
</feature>
<feature type="binding site" evidence="1">
    <location>
        <position position="1117"/>
    </location>
    <ligand>
        <name>[4Fe-4S] cluster</name>
        <dbReference type="ChEBI" id="CHEBI:49883"/>
    </ligand>
</feature>
<feature type="binding site" evidence="1">
    <location>
        <position position="1120"/>
    </location>
    <ligand>
        <name>[4Fe-4S] cluster</name>
        <dbReference type="ChEBI" id="CHEBI:49883"/>
    </ligand>
</feature>
<feature type="binding site" evidence="1">
    <location>
        <position position="1126"/>
    </location>
    <ligand>
        <name>[4Fe-4S] cluster</name>
        <dbReference type="ChEBI" id="CHEBI:49883"/>
    </ligand>
</feature>